<keyword id="KW-0460">Magnesium</keyword>
<keyword id="KW-0547">Nucleotide-binding</keyword>
<keyword id="KW-0548">Nucleotidyltransferase</keyword>
<keyword id="KW-0694">RNA-binding</keyword>
<keyword id="KW-0696">RNA-directed RNA polymerase</keyword>
<keyword id="KW-0808">Transferase</keyword>
<keyword id="KW-0693">Viral RNA replication</keyword>
<keyword id="KW-0946">Virion</keyword>
<accession>Q9QNB3</accession>
<name>RDRP_ROTHK</name>
<reference key="1">
    <citation type="submission" date="1999-01" db="EMBL/GenBank/DDBJ databases">
        <authorList>
            <person name="Taniguchi K."/>
        </authorList>
    </citation>
    <scope>NUCLEOTIDE SEQUENCE [MRNA]</scope>
</reference>
<organism>
    <name type="scientific">Rotavirus A (strain RVA/Human/Japan/KU/1995/G1P1A[8])</name>
    <name type="common">RV-A</name>
    <dbReference type="NCBI Taxonomy" id="10952"/>
    <lineage>
        <taxon>Viruses</taxon>
        <taxon>Riboviria</taxon>
        <taxon>Orthornavirae</taxon>
        <taxon>Duplornaviricota</taxon>
        <taxon>Resentoviricetes</taxon>
        <taxon>Reovirales</taxon>
        <taxon>Sedoreoviridae</taxon>
        <taxon>Rotavirus</taxon>
        <taxon>Rotavirus A</taxon>
    </lineage>
</organism>
<sequence length="1088" mass="125017">MGKYNLILSEYLSFVYNSQSAVQIPIYYSSNSELETRCIEFHAKCVDNSKKGLSLKPLFEEYKDVTDNATLLSILSYSYDKYNAVERKLVSYAKGKPLEADLTANELDYENNKITSELFQSAEEYTDSLMDPAILTSLSSNLNAVMFWLERHSNDIADANKIYKRRLDLFTIVASTINKYGVPRHNEKYRYEYEVMKDKPYYLVTWANSSIEMLMSVFSHEDYLIAKELIVLSYSNRSTLAKLVSSPMSILVALIDINGTFITNEELELEFSDKYVKAIVPDQTFDELQEMINNMKKIGLVDIPRMIQEWLIDCSLEKFTLMSKIYSWSFHVGFRKQKMIDAALDQLKTEYTKDVDDEMYNEYTMLIRDEIVKMLEIPVKHDDHLLRDSELAGLLSMSSASNGESRQIKFGRKTIFSTKKNMHVMDDIAHGKYTPGVIPPVNVDKPIPLGRRDVPGRRTRIIFILPYEYFIAQHAVVEKMLLYAKHTREYAEFYSQSNQLLSYGDVTRFLSSNSMVLYTDVSQWDSSQHNTQPFRKGIIMGLDMLSNMTNDPKVVQALNLYKQTQINLMDSYVQIPDGNVIKKNQYGAVASGEKQTKAANSIANLALIKTVLSRIANKYSFITKIIRVSGDDNYAVLQFNTDLTKQMIQDVSNDVRYIYFRMNAKVKALVSTVGIEIAKRYLAGGKIFFRAGINLLNNEKRGQSTQWDQAAILYSNYIVNKLRGFETDREFILTKIIQMTSVAITGSLRLFPSERVLTTNSTFKVFDSEDFIIEYGTTDDEVYIQRAFMSLSSQKSGIADEIASSQTFKNYVSKLSDQLLVSKNVIVSKGIAVTEKAKLNSYAPIYLEKRRAQISALLTMLQKPVSFKSNKNTINEILRDIKPFFVTTEDNLPIQYRKFMPTLPDNVQYVIQCIGSRTYQIEDSGSKSSISKLISKYSVYKPSIEELYKVISLREQEIQLYLVSLGVPLVDASAYVASRIYSQDKYKILESYVYNLLSINYGCYQLFDFNSPDLEKLIRIPFKGKIPAVTFILHLYAKLEIINYAIKNRAWISVFCNYPKSEMIKLWKKMWSITALRSPYTSANFFQD</sequence>
<proteinExistence type="evidence at transcript level"/>
<comment type="function">
    <text evidence="2">RNA-directed RNA polymerase that is involved in both transcription and genome replication. Together with VP3 capping enzyme, forms an enzyme complex positioned near the channels situated at each of the five-fold vertices of the core. Following infection, the outermost layer of the virus is lost, leaving a double-layered particle (DLP) made up of the core and VP6 shell. VP1 then catalyzes the transcription of fully conservative plus-strand genomic RNAs that are extruded through the DLP's channels into the cytoplasm where they function as mRNAs for translation of viral proteins. One copy of each of the viral (+)RNAs is also recruited during core assembly, together with newly synthesized polymerase complexes and VP2. The polymerase of these novo-formed particles catalyzes the synthesis of complementary minus-strands leading to dsRNA formation. To do so, the polymerase specifically recognizes and binds 4 bases 5'-UGUG-3' in the conserved 3'-sequence of plus-strand RNA templates. VP2 presumably activates the autoinhibited VP1-RNA complex to coordinate packaging and genome replication. Once dsRNA synthesis is complete, the polymerase switches to the transcriptional mode, thus providing secondary transcription (By similarity).</text>
</comment>
<comment type="catalytic activity">
    <reaction evidence="2">
        <text>RNA(n) + a ribonucleoside 5'-triphosphate = RNA(n+1) + diphosphate</text>
        <dbReference type="Rhea" id="RHEA:21248"/>
        <dbReference type="Rhea" id="RHEA-COMP:14527"/>
        <dbReference type="Rhea" id="RHEA-COMP:17342"/>
        <dbReference type="ChEBI" id="CHEBI:33019"/>
        <dbReference type="ChEBI" id="CHEBI:61557"/>
        <dbReference type="ChEBI" id="CHEBI:140395"/>
        <dbReference type="EC" id="2.7.7.48"/>
    </reaction>
</comment>
<comment type="cofactor">
    <cofactor evidence="3">
        <name>Mg(2+)</name>
        <dbReference type="ChEBI" id="CHEBI:18420"/>
    </cofactor>
</comment>
<comment type="subunit">
    <text evidence="1 3">Interacts with VP3 (Potential). Interacts with VP2; this interaction activates VP1. Interacts with NSP5; this interaction is probably necessary for the formation of functional virus factories. Interacts with NSP2; this interaction is weak (By similarity).</text>
</comment>
<comment type="subcellular location">
    <subcellularLocation>
        <location evidence="3">Virion</location>
    </subcellularLocation>
    <text evidence="1">Attached inside the inner capsid as a minor component. Also found in spherical cytoplasmic structures, called virus factories, that appear early after infection and are the site of viral replication and packaging (By similarity).</text>
</comment>
<comment type="similarity">
    <text evidence="3">Belongs to the reoviridae RNA-directed RNA polymerase family.</text>
</comment>
<evidence type="ECO:0000250" key="1"/>
<evidence type="ECO:0000255" key="2">
    <source>
        <dbReference type="PROSITE-ProRule" id="PRU00539"/>
    </source>
</evidence>
<evidence type="ECO:0000305" key="3"/>
<protein>
    <recommendedName>
        <fullName>RNA-directed RNA polymerase</fullName>
        <ecNumber>2.7.7.48</ecNumber>
    </recommendedName>
    <alternativeName>
        <fullName>Protein VP1</fullName>
    </alternativeName>
</protein>
<organismHost>
    <name type="scientific">Homo sapiens</name>
    <name type="common">Human</name>
    <dbReference type="NCBI Taxonomy" id="9606"/>
</organismHost>
<dbReference type="EC" id="2.7.7.48"/>
<dbReference type="EMBL" id="AB022765">
    <property type="protein sequence ID" value="BAA84962.1"/>
    <property type="molecule type" value="mRNA"/>
</dbReference>
<dbReference type="SMR" id="Q9QNB3"/>
<dbReference type="Proteomes" id="UP000001458">
    <property type="component" value="Genome"/>
</dbReference>
<dbReference type="GO" id="GO:0044423">
    <property type="term" value="C:virion component"/>
    <property type="evidence" value="ECO:0007669"/>
    <property type="project" value="UniProtKB-KW"/>
</dbReference>
<dbReference type="GO" id="GO:0000166">
    <property type="term" value="F:nucleotide binding"/>
    <property type="evidence" value="ECO:0007669"/>
    <property type="project" value="UniProtKB-KW"/>
</dbReference>
<dbReference type="GO" id="GO:0003723">
    <property type="term" value="F:RNA binding"/>
    <property type="evidence" value="ECO:0007669"/>
    <property type="project" value="UniProtKB-KW"/>
</dbReference>
<dbReference type="GO" id="GO:0003968">
    <property type="term" value="F:RNA-directed RNA polymerase activity"/>
    <property type="evidence" value="ECO:0007669"/>
    <property type="project" value="UniProtKB-KW"/>
</dbReference>
<dbReference type="GO" id="GO:0006351">
    <property type="term" value="P:DNA-templated transcription"/>
    <property type="evidence" value="ECO:0007669"/>
    <property type="project" value="InterPro"/>
</dbReference>
<dbReference type="GO" id="GO:0019079">
    <property type="term" value="P:viral genome replication"/>
    <property type="evidence" value="ECO:0007669"/>
    <property type="project" value="InterPro"/>
</dbReference>
<dbReference type="Gene3D" id="1.10.357.80">
    <property type="match status" value="2"/>
</dbReference>
<dbReference type="Gene3D" id="1.20.120.1390">
    <property type="match status" value="1"/>
</dbReference>
<dbReference type="Gene3D" id="3.30.230.140">
    <property type="match status" value="2"/>
</dbReference>
<dbReference type="Gene3D" id="3.30.70.2480">
    <property type="match status" value="1"/>
</dbReference>
<dbReference type="Gene3D" id="1.10.10.1990">
    <property type="entry name" value="Viral RNA-directed RNA polymerase, 4-helical domain"/>
    <property type="match status" value="1"/>
</dbReference>
<dbReference type="InterPro" id="IPR043502">
    <property type="entry name" value="DNA/RNA_pol_sf"/>
</dbReference>
<dbReference type="InterPro" id="IPR042032">
    <property type="entry name" value="RNA-dir_pol_4-hel_dom"/>
</dbReference>
<dbReference type="InterPro" id="IPR001795">
    <property type="entry name" value="RNA-dir_pol_luteovirus"/>
</dbReference>
<dbReference type="InterPro" id="IPR007097">
    <property type="entry name" value="RNA-dir_pol_reovirus"/>
</dbReference>
<dbReference type="InterPro" id="IPR022071">
    <property type="entry name" value="Rotavirus_VP1_C"/>
</dbReference>
<dbReference type="Pfam" id="PF02123">
    <property type="entry name" value="RdRP_4"/>
    <property type="match status" value="1"/>
</dbReference>
<dbReference type="Pfam" id="PF12289">
    <property type="entry name" value="Rotavirus_VP1"/>
    <property type="match status" value="1"/>
</dbReference>
<dbReference type="SUPFAM" id="SSF56672">
    <property type="entry name" value="DNA/RNA polymerases"/>
    <property type="match status" value="1"/>
</dbReference>
<dbReference type="PROSITE" id="PS50523">
    <property type="entry name" value="RDRP_DSRNA_REO"/>
    <property type="match status" value="1"/>
</dbReference>
<feature type="chain" id="PRO_0000368040" description="RNA-directed RNA polymerase">
    <location>
        <begin position="1"/>
        <end position="1088"/>
    </location>
</feature>
<feature type="domain" description="RdRp catalytic" evidence="2">
    <location>
        <begin position="501"/>
        <end position="687"/>
    </location>
</feature>